<evidence type="ECO:0000250" key="1"/>
<evidence type="ECO:0000250" key="2">
    <source>
        <dbReference type="UniProtKB" id="P01116"/>
    </source>
</evidence>
<evidence type="ECO:0000305" key="3"/>
<reference key="1">
    <citation type="submission" date="2003-06" db="EMBL/GenBank/DDBJ databases">
        <authorList>
            <consortium name="NIH - Zebrafish Gene Collection (ZGC) project"/>
        </authorList>
    </citation>
    <scope>NUCLEOTIDE SEQUENCE [LARGE SCALE MRNA]</scope>
</reference>
<comment type="catalytic activity">
    <reaction evidence="2">
        <text>GTP + H2O = GDP + phosphate + H(+)</text>
        <dbReference type="Rhea" id="RHEA:19669"/>
        <dbReference type="ChEBI" id="CHEBI:15377"/>
        <dbReference type="ChEBI" id="CHEBI:15378"/>
        <dbReference type="ChEBI" id="CHEBI:37565"/>
        <dbReference type="ChEBI" id="CHEBI:43474"/>
        <dbReference type="ChEBI" id="CHEBI:58189"/>
        <dbReference type="EC" id="3.6.5.2"/>
    </reaction>
</comment>
<comment type="similarity">
    <text evidence="3">Belongs to the small GTPase superfamily. Ras family.</text>
</comment>
<feature type="chain" id="PRO_0000333870" description="Ras-like protein family member 12">
    <location>
        <begin position="1"/>
        <end position="255"/>
    </location>
</feature>
<feature type="binding site" evidence="1">
    <location>
        <begin position="30"/>
        <end position="37"/>
    </location>
    <ligand>
        <name>GTP</name>
        <dbReference type="ChEBI" id="CHEBI:37565"/>
    </ligand>
</feature>
<feature type="binding site" evidence="1">
    <location>
        <begin position="77"/>
        <end position="81"/>
    </location>
    <ligand>
        <name>GTP</name>
        <dbReference type="ChEBI" id="CHEBI:37565"/>
    </ligand>
</feature>
<feature type="binding site" evidence="1">
    <location>
        <begin position="137"/>
        <end position="140"/>
    </location>
    <ligand>
        <name>GTP</name>
        <dbReference type="ChEBI" id="CHEBI:37565"/>
    </ligand>
</feature>
<protein>
    <recommendedName>
        <fullName>Ras-like protein family member 12</fullName>
        <ecNumber evidence="2">3.6.5.2</ecNumber>
    </recommendedName>
    <alternativeName>
        <fullName>RAS-like protein Ris</fullName>
    </alternativeName>
</protein>
<organism>
    <name type="scientific">Danio rerio</name>
    <name type="common">Zebrafish</name>
    <name type="synonym">Brachydanio rerio</name>
    <dbReference type="NCBI Taxonomy" id="7955"/>
    <lineage>
        <taxon>Eukaryota</taxon>
        <taxon>Metazoa</taxon>
        <taxon>Chordata</taxon>
        <taxon>Craniata</taxon>
        <taxon>Vertebrata</taxon>
        <taxon>Euteleostomi</taxon>
        <taxon>Actinopterygii</taxon>
        <taxon>Neopterygii</taxon>
        <taxon>Teleostei</taxon>
        <taxon>Ostariophysi</taxon>
        <taxon>Cypriniformes</taxon>
        <taxon>Danionidae</taxon>
        <taxon>Danioninae</taxon>
        <taxon>Danio</taxon>
    </lineage>
</organism>
<name>RASLC_DANRE</name>
<gene>
    <name type="primary">RASL12</name>
    <name type="ORF">zgc:63633</name>
</gene>
<accession>Q7SZ59</accession>
<keyword id="KW-0342">GTP-binding</keyword>
<keyword id="KW-0378">Hydrolase</keyword>
<keyword id="KW-0547">Nucleotide-binding</keyword>
<keyword id="KW-1185">Reference proteome</keyword>
<sequence length="255" mass="28411">MSLMFGKARTCNIVTVPEHEPSEVNIVILGAMGSGKSALTVKFLTKRFISEYDPNLEDTYSSEEVVDQQPVLVKVMDTADQEGPVNGERYLGWANAFIIVYSIDNRSSFEVCQQYLETVSLYSKGLQPEAPVILLGNKVDMERYRQVSKADGAALALRFGCLFFEVSACLDFLSVQHIFHEAVREVRRETERSIRPLFISEDKSAISLSSAPPLTACYKELPTPATAKLVTVKSSRAQSKRRAPTLTLLKGFKIF</sequence>
<dbReference type="EC" id="3.6.5.2" evidence="2"/>
<dbReference type="EMBL" id="BC054128">
    <property type="protein sequence ID" value="AAH54128.1"/>
    <property type="molecule type" value="mRNA"/>
</dbReference>
<dbReference type="RefSeq" id="NP_956689.1">
    <property type="nucleotide sequence ID" value="NM_200395.1"/>
</dbReference>
<dbReference type="RefSeq" id="XP_017212316.1">
    <property type="nucleotide sequence ID" value="XM_017356827.1"/>
</dbReference>
<dbReference type="SMR" id="Q7SZ59"/>
<dbReference type="FunCoup" id="Q7SZ59">
    <property type="interactions" value="157"/>
</dbReference>
<dbReference type="STRING" id="7955.ENSDARP00000142623"/>
<dbReference type="PaxDb" id="7955-ENSDARP00000103153"/>
<dbReference type="Ensembl" id="ENSDART00000018801">
    <property type="protein sequence ID" value="ENSDARP00000022937"/>
    <property type="gene ID" value="ENSDARG00000002701"/>
</dbReference>
<dbReference type="Ensembl" id="ENSDART00000115054">
    <property type="protein sequence ID" value="ENSDARP00000103153"/>
    <property type="gene ID" value="ENSDARG00000002701"/>
</dbReference>
<dbReference type="Ensembl" id="ENSDART00000172804">
    <property type="protein sequence ID" value="ENSDARP00000142623"/>
    <property type="gene ID" value="ENSDARG00000002701"/>
</dbReference>
<dbReference type="Ensembl" id="ENSDART00000180808">
    <property type="protein sequence ID" value="ENSDARP00000146603"/>
    <property type="gene ID" value="ENSDARG00000002701"/>
</dbReference>
<dbReference type="GeneID" id="393366"/>
<dbReference type="KEGG" id="dre:393366"/>
<dbReference type="AGR" id="ZFIN:ZDB-GENE-040426-1201"/>
<dbReference type="CTD" id="51285"/>
<dbReference type="ZFIN" id="ZDB-GENE-040426-1201">
    <property type="gene designation" value="rasl12"/>
</dbReference>
<dbReference type="eggNOG" id="KOG0395">
    <property type="taxonomic scope" value="Eukaryota"/>
</dbReference>
<dbReference type="HOGENOM" id="CLU_041217_9_4_1"/>
<dbReference type="InParanoid" id="Q7SZ59"/>
<dbReference type="OMA" id="VYSIDNM"/>
<dbReference type="OrthoDB" id="18798at2759"/>
<dbReference type="PhylomeDB" id="Q7SZ59"/>
<dbReference type="TreeFam" id="TF318030"/>
<dbReference type="PRO" id="PR:Q7SZ59"/>
<dbReference type="Proteomes" id="UP000000437">
    <property type="component" value="Chromosome 7"/>
</dbReference>
<dbReference type="Bgee" id="ENSDARG00000002701">
    <property type="expression patterns" value="Expressed in spleen and 17 other cell types or tissues"/>
</dbReference>
<dbReference type="ExpressionAtlas" id="Q7SZ59">
    <property type="expression patterns" value="differential"/>
</dbReference>
<dbReference type="GO" id="GO:0005886">
    <property type="term" value="C:plasma membrane"/>
    <property type="evidence" value="ECO:0000318"/>
    <property type="project" value="GO_Central"/>
</dbReference>
<dbReference type="GO" id="GO:0003925">
    <property type="term" value="F:G protein activity"/>
    <property type="evidence" value="ECO:0007669"/>
    <property type="project" value="UniProtKB-EC"/>
</dbReference>
<dbReference type="GO" id="GO:0019003">
    <property type="term" value="F:GDP binding"/>
    <property type="evidence" value="ECO:0000318"/>
    <property type="project" value="GO_Central"/>
</dbReference>
<dbReference type="GO" id="GO:0005525">
    <property type="term" value="F:GTP binding"/>
    <property type="evidence" value="ECO:0000318"/>
    <property type="project" value="GO_Central"/>
</dbReference>
<dbReference type="GO" id="GO:0003924">
    <property type="term" value="F:GTPase activity"/>
    <property type="evidence" value="ECO:0000318"/>
    <property type="project" value="GO_Central"/>
</dbReference>
<dbReference type="CDD" id="cd04146">
    <property type="entry name" value="RERG_RasL11_like"/>
    <property type="match status" value="1"/>
</dbReference>
<dbReference type="FunFam" id="3.40.50.300:FF:001016">
    <property type="entry name" value="ras-like protein family member 12"/>
    <property type="match status" value="1"/>
</dbReference>
<dbReference type="Gene3D" id="3.40.50.300">
    <property type="entry name" value="P-loop containing nucleotide triphosphate hydrolases"/>
    <property type="match status" value="1"/>
</dbReference>
<dbReference type="InterPro" id="IPR027417">
    <property type="entry name" value="P-loop_NTPase"/>
</dbReference>
<dbReference type="InterPro" id="IPR051065">
    <property type="entry name" value="Ras-related_GTPase"/>
</dbReference>
<dbReference type="InterPro" id="IPR005225">
    <property type="entry name" value="Small_GTP-bd"/>
</dbReference>
<dbReference type="InterPro" id="IPR001806">
    <property type="entry name" value="Small_GTPase"/>
</dbReference>
<dbReference type="NCBIfam" id="TIGR00231">
    <property type="entry name" value="small_GTP"/>
    <property type="match status" value="1"/>
</dbReference>
<dbReference type="PANTHER" id="PTHR45704">
    <property type="entry name" value="RAS-LIKE FAMILY MEMBER 11"/>
    <property type="match status" value="1"/>
</dbReference>
<dbReference type="Pfam" id="PF00071">
    <property type="entry name" value="Ras"/>
    <property type="match status" value="1"/>
</dbReference>
<dbReference type="PRINTS" id="PR00449">
    <property type="entry name" value="RASTRNSFRMNG"/>
</dbReference>
<dbReference type="SMART" id="SM00175">
    <property type="entry name" value="RAB"/>
    <property type="match status" value="1"/>
</dbReference>
<dbReference type="SMART" id="SM00173">
    <property type="entry name" value="RAS"/>
    <property type="match status" value="1"/>
</dbReference>
<dbReference type="SMART" id="SM00174">
    <property type="entry name" value="RHO"/>
    <property type="match status" value="1"/>
</dbReference>
<dbReference type="SUPFAM" id="SSF52540">
    <property type="entry name" value="P-loop containing nucleoside triphosphate hydrolases"/>
    <property type="match status" value="1"/>
</dbReference>
<dbReference type="PROSITE" id="PS51421">
    <property type="entry name" value="RAS"/>
    <property type="match status" value="1"/>
</dbReference>
<proteinExistence type="evidence at transcript level"/>